<reference key="1">
    <citation type="journal article" date="1991" name="J. Mol. Biol.">
        <title>Osmotic induction of gene osmC expression in Escherichia coli K12.</title>
        <authorList>
            <person name="Gutierrez C."/>
            <person name="Devedjian J.C."/>
        </authorList>
    </citation>
    <scope>NUCLEOTIDE SEQUENCE [GENOMIC DNA] OF 1-139</scope>
    <source>
        <strain>K12</strain>
    </source>
</reference>
<reference key="2">
    <citation type="journal article" date="1996" name="DNA Res.">
        <title>A 570-kb DNA sequence of the Escherichia coli K-12 genome corresponding to the 28.0-40.1 min region on the linkage map.</title>
        <authorList>
            <person name="Aiba H."/>
            <person name="Baba T."/>
            <person name="Fujita K."/>
            <person name="Hayashi K."/>
            <person name="Inada T."/>
            <person name="Isono K."/>
            <person name="Itoh T."/>
            <person name="Kasai H."/>
            <person name="Kashimoto K."/>
            <person name="Kimura S."/>
            <person name="Kitakawa M."/>
            <person name="Kitagawa M."/>
            <person name="Makino K."/>
            <person name="Miki T."/>
            <person name="Mizobuchi K."/>
            <person name="Mori H."/>
            <person name="Mori T."/>
            <person name="Motomura K."/>
            <person name="Nakade S."/>
            <person name="Nakamura Y."/>
            <person name="Nashimoto H."/>
            <person name="Nishio Y."/>
            <person name="Oshima T."/>
            <person name="Saito N."/>
            <person name="Sampei G."/>
            <person name="Seki Y."/>
            <person name="Sivasundaram S."/>
            <person name="Tagami H."/>
            <person name="Takeda J."/>
            <person name="Takemoto K."/>
            <person name="Takeuchi Y."/>
            <person name="Wada C."/>
            <person name="Yamamoto Y."/>
            <person name="Horiuchi T."/>
        </authorList>
    </citation>
    <scope>NUCLEOTIDE SEQUENCE [LARGE SCALE GENOMIC DNA]</scope>
    <source>
        <strain>K12 / W3110 / ATCC 27325 / DSM 5911</strain>
    </source>
</reference>
<reference key="3">
    <citation type="journal article" date="1997" name="Science">
        <title>The complete genome sequence of Escherichia coli K-12.</title>
        <authorList>
            <person name="Blattner F.R."/>
            <person name="Plunkett G. III"/>
            <person name="Bloch C.A."/>
            <person name="Perna N.T."/>
            <person name="Burland V."/>
            <person name="Riley M."/>
            <person name="Collado-Vides J."/>
            <person name="Glasner J.D."/>
            <person name="Rode C.K."/>
            <person name="Mayhew G.F."/>
            <person name="Gregor J."/>
            <person name="Davis N.W."/>
            <person name="Kirkpatrick H.A."/>
            <person name="Goeden M.A."/>
            <person name="Rose D.J."/>
            <person name="Mau B."/>
            <person name="Shao Y."/>
        </authorList>
    </citation>
    <scope>NUCLEOTIDE SEQUENCE [LARGE SCALE GENOMIC DNA]</scope>
    <source>
        <strain>K12 / MG1655 / ATCC 47076</strain>
    </source>
</reference>
<reference key="4">
    <citation type="journal article" date="2006" name="Mol. Syst. Biol.">
        <title>Highly accurate genome sequences of Escherichia coli K-12 strains MG1655 and W3110.</title>
        <authorList>
            <person name="Hayashi K."/>
            <person name="Morooka N."/>
            <person name="Yamamoto Y."/>
            <person name="Fujita K."/>
            <person name="Isono K."/>
            <person name="Choi S."/>
            <person name="Ohtsubo E."/>
            <person name="Baba T."/>
            <person name="Wanner B.L."/>
            <person name="Mori H."/>
            <person name="Horiuchi T."/>
        </authorList>
    </citation>
    <scope>NUCLEOTIDE SEQUENCE [LARGE SCALE GENOMIC DNA]</scope>
    <source>
        <strain>K12 / W3110 / ATCC 27325 / DSM 5911</strain>
    </source>
</reference>
<reference key="5">
    <citation type="journal article" date="1997" name="Electrophoresis">
        <title>Comparing the predicted and observed properties of proteins encoded in the genome of Escherichia coli K-12.</title>
        <authorList>
            <person name="Link A.J."/>
            <person name="Robison K."/>
            <person name="Church G.M."/>
        </authorList>
    </citation>
    <scope>PROTEIN SEQUENCE OF 2-13</scope>
    <source>
        <strain>K12 / EMG2</strain>
    </source>
</reference>
<reference key="6">
    <citation type="journal article" date="2009" name="Mol. Cell. Proteomics">
        <title>Lysine acetylation is a highly abundant and evolutionarily conserved modification in Escherichia coli.</title>
        <authorList>
            <person name="Zhang J."/>
            <person name="Sprung R."/>
            <person name="Pei J."/>
            <person name="Tan X."/>
            <person name="Kim S."/>
            <person name="Zhu H."/>
            <person name="Liu C.F."/>
            <person name="Grishin N.V."/>
            <person name="Zhao Y."/>
        </authorList>
    </citation>
    <scope>ACETYLATION [LARGE SCALE ANALYSIS] AT LYS-16</scope>
    <scope>IDENTIFICATION BY MASS SPECTROMETRY</scope>
    <source>
        <strain>K12 / JW1106</strain>
        <strain>K12 / MG1655 / ATCC 47076</strain>
    </source>
</reference>
<reference key="7">
    <citation type="journal article" date="2003" name="Protein Sci.">
        <title>Structural and functional features of the Escherichia coli hydroperoxide resistance protein OsmC.</title>
        <authorList>
            <person name="Lesniak J."/>
            <person name="Barton W.A."/>
            <person name="Nikolov D.B."/>
        </authorList>
    </citation>
    <scope>X-RAY CRYSTALLOGRAPHY (1.8 ANGSTROMS)</scope>
    <scope>FUNCTION</scope>
</reference>
<reference key="8">
    <citation type="journal article" date="2004" name="Acta Crystallogr. D">
        <title>Structure of OsmC from Escherichia coli: a salt-shock-induced protein.</title>
        <authorList>
            <person name="Shin D.H."/>
            <person name="Choi I.G."/>
            <person name="Busso D."/>
            <person name="Jancarik J."/>
            <person name="Yokota H."/>
            <person name="Kim R."/>
            <person name="Kim S.H."/>
        </authorList>
    </citation>
    <scope>X-RAY CRYSTALLOGRAPHY (2.4 ANGSTROMS)</scope>
</reference>
<proteinExistence type="evidence at protein level"/>
<keyword id="KW-0002">3D-structure</keyword>
<keyword id="KW-0007">Acetylation</keyword>
<keyword id="KW-0049">Antioxidant</keyword>
<keyword id="KW-0963">Cytoplasm</keyword>
<keyword id="KW-0903">Direct protein sequencing</keyword>
<keyword id="KW-0560">Oxidoreductase</keyword>
<keyword id="KW-0575">Peroxidase</keyword>
<keyword id="KW-1185">Reference proteome</keyword>
<organism>
    <name type="scientific">Escherichia coli (strain K12)</name>
    <dbReference type="NCBI Taxonomy" id="83333"/>
    <lineage>
        <taxon>Bacteria</taxon>
        <taxon>Pseudomonadati</taxon>
        <taxon>Pseudomonadota</taxon>
        <taxon>Gammaproteobacteria</taxon>
        <taxon>Enterobacterales</taxon>
        <taxon>Enterobacteriaceae</taxon>
        <taxon>Escherichia</taxon>
    </lineage>
</organism>
<name>OSMC_ECOLI</name>
<gene>
    <name type="primary">osmC</name>
    <name type="ordered locus">b1482</name>
    <name type="ordered locus">JW1477</name>
</gene>
<accession>P0C0L2</accession>
<accession>P23929</accession>
<accession>P77655</accession>
<evidence type="ECO:0000256" key="1">
    <source>
        <dbReference type="SAM" id="MobiDB-lite"/>
    </source>
</evidence>
<evidence type="ECO:0000269" key="2">
    <source>
    </source>
</evidence>
<evidence type="ECO:0000269" key="3">
    <source>
    </source>
</evidence>
<evidence type="ECO:0000269" key="4">
    <source>
    </source>
</evidence>
<evidence type="ECO:0000305" key="5"/>
<evidence type="ECO:0007829" key="6">
    <source>
        <dbReference type="PDB" id="1QWI"/>
    </source>
</evidence>
<protein>
    <recommendedName>
        <fullName>Peroxiredoxin OsmC</fullName>
        <ecNumber>1.11.1.-</ecNumber>
    </recommendedName>
    <alternativeName>
        <fullName>Osmotically-inducible protein C</fullName>
    </alternativeName>
</protein>
<sequence length="143" mass="15088">MTIHKKGQAHWEGDIKRGKGTVSTESGVLNQQPYGFNTRFEGEKGTNPEELIGAAHAACFSMALSLMLGEAGFTPTSIDTTADVSLDKVDAGFAITKIALKSEVAVPGIDASTFDGIIQKAKAGCPVSQVLKAEITLDYQLKS</sequence>
<comment type="function">
    <text evidence="2">Preferentially metabolizes organic hydroperoxides over inorganic hydrogen peroxide.</text>
</comment>
<comment type="catalytic activity">
    <reaction>
        <text>a hydroperoxide + [protein]-dithiol = [protein]-disulfide + an alcohol + H2O</text>
        <dbReference type="Rhea" id="RHEA:10008"/>
        <dbReference type="Rhea" id="RHEA-COMP:10593"/>
        <dbReference type="Rhea" id="RHEA-COMP:10594"/>
        <dbReference type="ChEBI" id="CHEBI:15377"/>
        <dbReference type="ChEBI" id="CHEBI:29950"/>
        <dbReference type="ChEBI" id="CHEBI:30879"/>
        <dbReference type="ChEBI" id="CHEBI:35924"/>
        <dbReference type="ChEBI" id="CHEBI:50058"/>
    </reaction>
</comment>
<comment type="subcellular location">
    <subcellularLocation>
        <location>Cytoplasm</location>
    </subcellularLocation>
</comment>
<comment type="induction">
    <text>By elevated osmotic pressure in the growth medium.</text>
</comment>
<comment type="similarity">
    <text evidence="5">Belongs to the OsmC/Ohr family.</text>
</comment>
<dbReference type="EC" id="1.11.1.-"/>
<dbReference type="EMBL" id="X57433">
    <property type="protein sequence ID" value="CAA40680.1"/>
    <property type="molecule type" value="Genomic_DNA"/>
</dbReference>
<dbReference type="EMBL" id="U00096">
    <property type="protein sequence ID" value="AAC74555.1"/>
    <property type="molecule type" value="Genomic_DNA"/>
</dbReference>
<dbReference type="EMBL" id="AP009048">
    <property type="protein sequence ID" value="BAA15128.1"/>
    <property type="molecule type" value="Genomic_DNA"/>
</dbReference>
<dbReference type="PIR" id="E64901">
    <property type="entry name" value="E64901"/>
</dbReference>
<dbReference type="RefSeq" id="NP_415999.1">
    <property type="nucleotide sequence ID" value="NC_000913.3"/>
</dbReference>
<dbReference type="RefSeq" id="WP_000152305.1">
    <property type="nucleotide sequence ID" value="NZ_STEB01000054.1"/>
</dbReference>
<dbReference type="PDB" id="1NYE">
    <property type="method" value="X-ray"/>
    <property type="resolution" value="2.40 A"/>
    <property type="chains" value="A/B/C/D/E/F=1-143"/>
</dbReference>
<dbReference type="PDB" id="1QWI">
    <property type="method" value="X-ray"/>
    <property type="resolution" value="1.80 A"/>
    <property type="chains" value="A/B/C/D=1-143"/>
</dbReference>
<dbReference type="PDBsum" id="1NYE"/>
<dbReference type="PDBsum" id="1QWI"/>
<dbReference type="SMR" id="P0C0L2"/>
<dbReference type="BioGRID" id="4260206">
    <property type="interactions" value="243"/>
</dbReference>
<dbReference type="BioGRID" id="850404">
    <property type="interactions" value="3"/>
</dbReference>
<dbReference type="DIP" id="DIP-48058N"/>
<dbReference type="FunCoup" id="P0C0L2">
    <property type="interactions" value="250"/>
</dbReference>
<dbReference type="IntAct" id="P0C0L2">
    <property type="interactions" value="11"/>
</dbReference>
<dbReference type="STRING" id="511145.b1482"/>
<dbReference type="iPTMnet" id="P0C0L2"/>
<dbReference type="jPOST" id="P0C0L2"/>
<dbReference type="PaxDb" id="511145-b1482"/>
<dbReference type="DNASU" id="946043"/>
<dbReference type="EnsemblBacteria" id="AAC74555">
    <property type="protein sequence ID" value="AAC74555"/>
    <property type="gene ID" value="b1482"/>
</dbReference>
<dbReference type="GeneID" id="75203185"/>
<dbReference type="GeneID" id="946043"/>
<dbReference type="KEGG" id="ecj:JW1477"/>
<dbReference type="KEGG" id="eco:b1482"/>
<dbReference type="KEGG" id="ecoc:C3026_08590"/>
<dbReference type="PATRIC" id="fig|1411691.4.peg.785"/>
<dbReference type="EchoBASE" id="EB0674"/>
<dbReference type="eggNOG" id="COG1764">
    <property type="taxonomic scope" value="Bacteria"/>
</dbReference>
<dbReference type="HOGENOM" id="CLU_106355_1_0_6"/>
<dbReference type="InParanoid" id="P0C0L2"/>
<dbReference type="OMA" id="ANCPVSQ"/>
<dbReference type="OrthoDB" id="9807532at2"/>
<dbReference type="PhylomeDB" id="P0C0L2"/>
<dbReference type="BioCyc" id="EcoCyc:EG10680-MONOMER"/>
<dbReference type="BioCyc" id="MetaCyc:EG10680-MONOMER"/>
<dbReference type="EvolutionaryTrace" id="P0C0L2"/>
<dbReference type="PRO" id="PR:P0C0L2"/>
<dbReference type="Proteomes" id="UP000000625">
    <property type="component" value="Chromosome"/>
</dbReference>
<dbReference type="GO" id="GO:0005829">
    <property type="term" value="C:cytosol"/>
    <property type="evidence" value="ECO:0000314"/>
    <property type="project" value="EcoCyc"/>
</dbReference>
<dbReference type="GO" id="GO:0004601">
    <property type="term" value="F:peroxidase activity"/>
    <property type="evidence" value="ECO:0000314"/>
    <property type="project" value="EcoCyc"/>
</dbReference>
<dbReference type="GO" id="GO:0051920">
    <property type="term" value="F:peroxiredoxin activity"/>
    <property type="evidence" value="ECO:0000314"/>
    <property type="project" value="EcoCyc"/>
</dbReference>
<dbReference type="GO" id="GO:0042803">
    <property type="term" value="F:protein homodimerization activity"/>
    <property type="evidence" value="ECO:0000314"/>
    <property type="project" value="EcoCyc"/>
</dbReference>
<dbReference type="GO" id="GO:0006972">
    <property type="term" value="P:hyperosmotic response"/>
    <property type="evidence" value="ECO:0000270"/>
    <property type="project" value="EcoCyc"/>
</dbReference>
<dbReference type="GO" id="GO:0033194">
    <property type="term" value="P:response to hydroperoxide"/>
    <property type="evidence" value="ECO:0000315"/>
    <property type="project" value="EcoCyc"/>
</dbReference>
<dbReference type="GO" id="GO:0006979">
    <property type="term" value="P:response to oxidative stress"/>
    <property type="evidence" value="ECO:0000315"/>
    <property type="project" value="EcoCyc"/>
</dbReference>
<dbReference type="FunFam" id="3.30.300.20:FF:000010">
    <property type="entry name" value="OsmC family peroxiredoxin"/>
    <property type="match status" value="1"/>
</dbReference>
<dbReference type="Gene3D" id="3.30.300.20">
    <property type="match status" value="1"/>
</dbReference>
<dbReference type="InterPro" id="IPR015946">
    <property type="entry name" value="KH_dom-like_a/b"/>
</dbReference>
<dbReference type="InterPro" id="IPR003718">
    <property type="entry name" value="OsmC/Ohr_fam"/>
</dbReference>
<dbReference type="InterPro" id="IPR036102">
    <property type="entry name" value="OsmC/Ohrsf"/>
</dbReference>
<dbReference type="InterPro" id="IPR052707">
    <property type="entry name" value="OsmC_Ohr_Peroxiredoxin"/>
</dbReference>
<dbReference type="InterPro" id="IPR019904">
    <property type="entry name" value="Peroxiredoxin_OsmC"/>
</dbReference>
<dbReference type="NCBIfam" id="TIGR03562">
    <property type="entry name" value="osmo_induc_OsmC"/>
    <property type="match status" value="1"/>
</dbReference>
<dbReference type="PANTHER" id="PTHR42830">
    <property type="entry name" value="OSMOTICALLY INDUCIBLE FAMILY PROTEIN"/>
    <property type="match status" value="1"/>
</dbReference>
<dbReference type="PANTHER" id="PTHR42830:SF1">
    <property type="entry name" value="OSMOTICALLY INDUCIBLE FAMILY PROTEIN"/>
    <property type="match status" value="1"/>
</dbReference>
<dbReference type="Pfam" id="PF02566">
    <property type="entry name" value="OsmC"/>
    <property type="match status" value="1"/>
</dbReference>
<dbReference type="SUPFAM" id="SSF82784">
    <property type="entry name" value="OsmC-like"/>
    <property type="match status" value="1"/>
</dbReference>
<feature type="initiator methionine" description="Removed" evidence="4">
    <location>
        <position position="1"/>
    </location>
</feature>
<feature type="chain" id="PRO_0000172729" description="Peroxiredoxin OsmC">
    <location>
        <begin position="2"/>
        <end position="143"/>
    </location>
</feature>
<feature type="region of interest" description="Disordered" evidence="1">
    <location>
        <begin position="1"/>
        <end position="27"/>
    </location>
</feature>
<feature type="modified residue" description="N6-acetyllysine" evidence="3">
    <location>
        <position position="16"/>
    </location>
</feature>
<feature type="strand" evidence="6">
    <location>
        <begin position="3"/>
        <end position="13"/>
    </location>
</feature>
<feature type="strand" evidence="6">
    <location>
        <begin position="15"/>
        <end position="17"/>
    </location>
</feature>
<feature type="strand" evidence="6">
    <location>
        <begin position="19"/>
        <end position="24"/>
    </location>
</feature>
<feature type="strand" evidence="6">
    <location>
        <begin position="27"/>
        <end position="34"/>
    </location>
</feature>
<feature type="helix" evidence="6">
    <location>
        <begin position="36"/>
        <end position="40"/>
    </location>
</feature>
<feature type="helix" evidence="6">
    <location>
        <begin position="48"/>
        <end position="70"/>
    </location>
</feature>
<feature type="strand" evidence="6">
    <location>
        <begin position="76"/>
        <end position="89"/>
    </location>
</feature>
<feature type="strand" evidence="6">
    <location>
        <begin position="92"/>
        <end position="105"/>
    </location>
</feature>
<feature type="helix" evidence="6">
    <location>
        <begin position="111"/>
        <end position="124"/>
    </location>
</feature>
<feature type="helix" evidence="6">
    <location>
        <begin position="126"/>
        <end position="130"/>
    </location>
</feature>
<feature type="strand" evidence="6">
    <location>
        <begin position="133"/>
        <end position="142"/>
    </location>
</feature>